<feature type="chain" id="PRO_0000282785" description="Ribosomal RNA large subunit methyltransferase E">
    <location>
        <begin position="1"/>
        <end position="224"/>
    </location>
</feature>
<feature type="active site" description="Proton acceptor" evidence="1">
    <location>
        <position position="178"/>
    </location>
</feature>
<feature type="binding site" evidence="1">
    <location>
        <position position="64"/>
    </location>
    <ligand>
        <name>S-adenosyl-L-methionine</name>
        <dbReference type="ChEBI" id="CHEBI:59789"/>
    </ligand>
</feature>
<feature type="binding site" evidence="1">
    <location>
        <position position="66"/>
    </location>
    <ligand>
        <name>S-adenosyl-L-methionine</name>
        <dbReference type="ChEBI" id="CHEBI:59789"/>
    </ligand>
</feature>
<feature type="binding site" evidence="1">
    <location>
        <position position="97"/>
    </location>
    <ligand>
        <name>S-adenosyl-L-methionine</name>
        <dbReference type="ChEBI" id="CHEBI:59789"/>
    </ligand>
</feature>
<feature type="binding site" evidence="1">
    <location>
        <position position="113"/>
    </location>
    <ligand>
        <name>S-adenosyl-L-methionine</name>
        <dbReference type="ChEBI" id="CHEBI:59789"/>
    </ligand>
</feature>
<feature type="binding site" evidence="1">
    <location>
        <position position="138"/>
    </location>
    <ligand>
        <name>S-adenosyl-L-methionine</name>
        <dbReference type="ChEBI" id="CHEBI:59789"/>
    </ligand>
</feature>
<keyword id="KW-0963">Cytoplasm</keyword>
<keyword id="KW-0489">Methyltransferase</keyword>
<keyword id="KW-1185">Reference proteome</keyword>
<keyword id="KW-0698">rRNA processing</keyword>
<keyword id="KW-0949">S-adenosyl-L-methionine</keyword>
<keyword id="KW-0808">Transferase</keyword>
<gene>
    <name evidence="1" type="primary">rlmE</name>
    <name evidence="1" type="synonym">ftsJ</name>
    <name evidence="1" type="synonym">rrmJ</name>
    <name type="ordered locus">Rfer_2010</name>
</gene>
<sequence>MKSQTKSSKVNRAWLNDHVNDTYVKLAKLEGYRARAAYKLKEIDETLGLIKPGQLVVDLGSTPGAWSQYVRRKMSPKTATGGGAAVGALNGTIIALDILPMEPVEGVVFLQGDFRESDVLLQLEAEMKGRQADLVLSDMAPNLSGIDSADAARIENLVELALEFAQNHMKPEGALVAKVFHGASYDPLVKRFKETFLLVKRIKPKASRDKSSETFLVGLGLKPH</sequence>
<dbReference type="EC" id="2.1.1.166" evidence="1"/>
<dbReference type="EMBL" id="CP000267">
    <property type="protein sequence ID" value="ABD69735.1"/>
    <property type="molecule type" value="Genomic_DNA"/>
</dbReference>
<dbReference type="RefSeq" id="WP_011464303.1">
    <property type="nucleotide sequence ID" value="NC_007908.1"/>
</dbReference>
<dbReference type="SMR" id="Q21WW8"/>
<dbReference type="STRING" id="338969.Rfer_2010"/>
<dbReference type="KEGG" id="rfr:Rfer_2010"/>
<dbReference type="eggNOG" id="COG0293">
    <property type="taxonomic scope" value="Bacteria"/>
</dbReference>
<dbReference type="HOGENOM" id="CLU_009422_4_1_4"/>
<dbReference type="OrthoDB" id="9790080at2"/>
<dbReference type="Proteomes" id="UP000008332">
    <property type="component" value="Chromosome"/>
</dbReference>
<dbReference type="GO" id="GO:0005737">
    <property type="term" value="C:cytoplasm"/>
    <property type="evidence" value="ECO:0007669"/>
    <property type="project" value="UniProtKB-SubCell"/>
</dbReference>
<dbReference type="GO" id="GO:0008650">
    <property type="term" value="F:rRNA (uridine-2'-O-)-methyltransferase activity"/>
    <property type="evidence" value="ECO:0007669"/>
    <property type="project" value="UniProtKB-UniRule"/>
</dbReference>
<dbReference type="Gene3D" id="3.40.50.150">
    <property type="entry name" value="Vaccinia Virus protein VP39"/>
    <property type="match status" value="1"/>
</dbReference>
<dbReference type="HAMAP" id="MF_01547">
    <property type="entry name" value="RNA_methyltr_E"/>
    <property type="match status" value="1"/>
</dbReference>
<dbReference type="InterPro" id="IPR050082">
    <property type="entry name" value="RNA_methyltr_RlmE"/>
</dbReference>
<dbReference type="InterPro" id="IPR002877">
    <property type="entry name" value="RNA_MeTrfase_FtsJ_dom"/>
</dbReference>
<dbReference type="InterPro" id="IPR015507">
    <property type="entry name" value="rRNA-MeTfrase_E"/>
</dbReference>
<dbReference type="InterPro" id="IPR029063">
    <property type="entry name" value="SAM-dependent_MTases_sf"/>
</dbReference>
<dbReference type="PANTHER" id="PTHR10920">
    <property type="entry name" value="RIBOSOMAL RNA METHYLTRANSFERASE"/>
    <property type="match status" value="1"/>
</dbReference>
<dbReference type="PANTHER" id="PTHR10920:SF18">
    <property type="entry name" value="RRNA METHYLTRANSFERASE 2, MITOCHONDRIAL"/>
    <property type="match status" value="1"/>
</dbReference>
<dbReference type="Pfam" id="PF01728">
    <property type="entry name" value="FtsJ"/>
    <property type="match status" value="1"/>
</dbReference>
<dbReference type="PIRSF" id="PIRSF005461">
    <property type="entry name" value="23S_rRNA_mtase"/>
    <property type="match status" value="1"/>
</dbReference>
<dbReference type="SUPFAM" id="SSF53335">
    <property type="entry name" value="S-adenosyl-L-methionine-dependent methyltransferases"/>
    <property type="match status" value="1"/>
</dbReference>
<proteinExistence type="inferred from homology"/>
<accession>Q21WW8</accession>
<protein>
    <recommendedName>
        <fullName evidence="1">Ribosomal RNA large subunit methyltransferase E</fullName>
        <ecNumber evidence="1">2.1.1.166</ecNumber>
    </recommendedName>
    <alternativeName>
        <fullName evidence="1">23S rRNA Um2552 methyltransferase</fullName>
    </alternativeName>
    <alternativeName>
        <fullName evidence="1">rRNA (uridine-2'-O-)-methyltransferase</fullName>
    </alternativeName>
</protein>
<evidence type="ECO:0000255" key="1">
    <source>
        <dbReference type="HAMAP-Rule" id="MF_01547"/>
    </source>
</evidence>
<name>RLME_ALBFT</name>
<reference key="1">
    <citation type="submission" date="2006-02" db="EMBL/GenBank/DDBJ databases">
        <title>Complete sequence of chromosome of Rhodoferax ferrireducens DSM 15236.</title>
        <authorList>
            <person name="Copeland A."/>
            <person name="Lucas S."/>
            <person name="Lapidus A."/>
            <person name="Barry K."/>
            <person name="Detter J.C."/>
            <person name="Glavina del Rio T."/>
            <person name="Hammon N."/>
            <person name="Israni S."/>
            <person name="Pitluck S."/>
            <person name="Brettin T."/>
            <person name="Bruce D."/>
            <person name="Han C."/>
            <person name="Tapia R."/>
            <person name="Gilna P."/>
            <person name="Kiss H."/>
            <person name="Schmutz J."/>
            <person name="Larimer F."/>
            <person name="Land M."/>
            <person name="Kyrpides N."/>
            <person name="Ivanova N."/>
            <person name="Richardson P."/>
        </authorList>
    </citation>
    <scope>NUCLEOTIDE SEQUENCE [LARGE SCALE GENOMIC DNA]</scope>
    <source>
        <strain>ATCC BAA-621 / DSM 15236 / T118</strain>
    </source>
</reference>
<comment type="function">
    <text evidence="1">Specifically methylates the uridine in position 2552 of 23S rRNA at the 2'-O position of the ribose in the fully assembled 50S ribosomal subunit.</text>
</comment>
<comment type="catalytic activity">
    <reaction evidence="1">
        <text>uridine(2552) in 23S rRNA + S-adenosyl-L-methionine = 2'-O-methyluridine(2552) in 23S rRNA + S-adenosyl-L-homocysteine + H(+)</text>
        <dbReference type="Rhea" id="RHEA:42720"/>
        <dbReference type="Rhea" id="RHEA-COMP:10202"/>
        <dbReference type="Rhea" id="RHEA-COMP:10203"/>
        <dbReference type="ChEBI" id="CHEBI:15378"/>
        <dbReference type="ChEBI" id="CHEBI:57856"/>
        <dbReference type="ChEBI" id="CHEBI:59789"/>
        <dbReference type="ChEBI" id="CHEBI:65315"/>
        <dbReference type="ChEBI" id="CHEBI:74478"/>
        <dbReference type="EC" id="2.1.1.166"/>
    </reaction>
</comment>
<comment type="subcellular location">
    <subcellularLocation>
        <location evidence="1">Cytoplasm</location>
    </subcellularLocation>
</comment>
<comment type="similarity">
    <text evidence="1">Belongs to the class I-like SAM-binding methyltransferase superfamily. RNA methyltransferase RlmE family.</text>
</comment>
<organism>
    <name type="scientific">Albidiferax ferrireducens (strain ATCC BAA-621 / DSM 15236 / T118)</name>
    <name type="common">Rhodoferax ferrireducens</name>
    <dbReference type="NCBI Taxonomy" id="338969"/>
    <lineage>
        <taxon>Bacteria</taxon>
        <taxon>Pseudomonadati</taxon>
        <taxon>Pseudomonadota</taxon>
        <taxon>Betaproteobacteria</taxon>
        <taxon>Burkholderiales</taxon>
        <taxon>Comamonadaceae</taxon>
        <taxon>Rhodoferax</taxon>
    </lineage>
</organism>